<keyword id="KW-1185">Reference proteome</keyword>
<keyword id="KW-0687">Ribonucleoprotein</keyword>
<keyword id="KW-0689">Ribosomal protein</keyword>
<keyword id="KW-0694">RNA-binding</keyword>
<keyword id="KW-0699">rRNA-binding</keyword>
<keyword id="KW-0820">tRNA-binding</keyword>
<reference key="1">
    <citation type="submission" date="2006-12" db="EMBL/GenBank/DDBJ databases">
        <title>Complete sequence of chromosome 1 of Verminephrobacter eiseniae EF01-2.</title>
        <authorList>
            <person name="Copeland A."/>
            <person name="Lucas S."/>
            <person name="Lapidus A."/>
            <person name="Barry K."/>
            <person name="Detter J.C."/>
            <person name="Glavina del Rio T."/>
            <person name="Dalin E."/>
            <person name="Tice H."/>
            <person name="Pitluck S."/>
            <person name="Chertkov O."/>
            <person name="Brettin T."/>
            <person name="Bruce D."/>
            <person name="Han C."/>
            <person name="Tapia R."/>
            <person name="Gilna P."/>
            <person name="Schmutz J."/>
            <person name="Larimer F."/>
            <person name="Land M."/>
            <person name="Hauser L."/>
            <person name="Kyrpides N."/>
            <person name="Kim E."/>
            <person name="Stahl D."/>
            <person name="Richardson P."/>
        </authorList>
    </citation>
    <scope>NUCLEOTIDE SEQUENCE [LARGE SCALE GENOMIC DNA]</scope>
    <source>
        <strain>EF01-2</strain>
    </source>
</reference>
<accession>A1WK95</accession>
<name>RS13_VEREI</name>
<organism>
    <name type="scientific">Verminephrobacter eiseniae (strain EF01-2)</name>
    <dbReference type="NCBI Taxonomy" id="391735"/>
    <lineage>
        <taxon>Bacteria</taxon>
        <taxon>Pseudomonadati</taxon>
        <taxon>Pseudomonadota</taxon>
        <taxon>Betaproteobacteria</taxon>
        <taxon>Burkholderiales</taxon>
        <taxon>Comamonadaceae</taxon>
        <taxon>Verminephrobacter</taxon>
    </lineage>
</organism>
<sequence>MARIAGINIPPHKHAEIGLTAIFGIGRNRARKICDASGIAYSKKIKDLTDGDLEKIRVQIEQFTIEGDLRRETTMNIKRLMDIGCYRGFRHRRGLPVRGQRTRTNARTRKGPRKGAAALKK</sequence>
<gene>
    <name evidence="1" type="primary">rpsM</name>
    <name type="ordered locus">Veis_2304</name>
</gene>
<comment type="function">
    <text evidence="1">Located at the top of the head of the 30S subunit, it contacts several helices of the 16S rRNA. In the 70S ribosome it contacts the 23S rRNA (bridge B1a) and protein L5 of the 50S subunit (bridge B1b), connecting the 2 subunits; these bridges are implicated in subunit movement. Contacts the tRNAs in the A and P-sites.</text>
</comment>
<comment type="subunit">
    <text evidence="1">Part of the 30S ribosomal subunit. Forms a loose heterodimer with protein S19. Forms two bridges to the 50S subunit in the 70S ribosome.</text>
</comment>
<comment type="similarity">
    <text evidence="1">Belongs to the universal ribosomal protein uS13 family.</text>
</comment>
<evidence type="ECO:0000255" key="1">
    <source>
        <dbReference type="HAMAP-Rule" id="MF_01315"/>
    </source>
</evidence>
<evidence type="ECO:0000256" key="2">
    <source>
        <dbReference type="SAM" id="MobiDB-lite"/>
    </source>
</evidence>
<evidence type="ECO:0000305" key="3"/>
<protein>
    <recommendedName>
        <fullName evidence="1">Small ribosomal subunit protein uS13</fullName>
    </recommendedName>
    <alternativeName>
        <fullName evidence="3">30S ribosomal protein S13</fullName>
    </alternativeName>
</protein>
<proteinExistence type="inferred from homology"/>
<dbReference type="EMBL" id="CP000542">
    <property type="protein sequence ID" value="ABM58052.1"/>
    <property type="molecule type" value="Genomic_DNA"/>
</dbReference>
<dbReference type="RefSeq" id="WP_011810055.1">
    <property type="nucleotide sequence ID" value="NC_008786.1"/>
</dbReference>
<dbReference type="SMR" id="A1WK95"/>
<dbReference type="STRING" id="391735.Veis_2304"/>
<dbReference type="GeneID" id="76460868"/>
<dbReference type="KEGG" id="vei:Veis_2304"/>
<dbReference type="eggNOG" id="COG0099">
    <property type="taxonomic scope" value="Bacteria"/>
</dbReference>
<dbReference type="HOGENOM" id="CLU_103849_1_2_4"/>
<dbReference type="OrthoDB" id="9803610at2"/>
<dbReference type="Proteomes" id="UP000000374">
    <property type="component" value="Chromosome"/>
</dbReference>
<dbReference type="GO" id="GO:0005829">
    <property type="term" value="C:cytosol"/>
    <property type="evidence" value="ECO:0007669"/>
    <property type="project" value="TreeGrafter"/>
</dbReference>
<dbReference type="GO" id="GO:0015935">
    <property type="term" value="C:small ribosomal subunit"/>
    <property type="evidence" value="ECO:0007669"/>
    <property type="project" value="TreeGrafter"/>
</dbReference>
<dbReference type="GO" id="GO:0019843">
    <property type="term" value="F:rRNA binding"/>
    <property type="evidence" value="ECO:0007669"/>
    <property type="project" value="UniProtKB-UniRule"/>
</dbReference>
<dbReference type="GO" id="GO:0003735">
    <property type="term" value="F:structural constituent of ribosome"/>
    <property type="evidence" value="ECO:0007669"/>
    <property type="project" value="InterPro"/>
</dbReference>
<dbReference type="GO" id="GO:0000049">
    <property type="term" value="F:tRNA binding"/>
    <property type="evidence" value="ECO:0007669"/>
    <property type="project" value="UniProtKB-UniRule"/>
</dbReference>
<dbReference type="GO" id="GO:0006412">
    <property type="term" value="P:translation"/>
    <property type="evidence" value="ECO:0007669"/>
    <property type="project" value="UniProtKB-UniRule"/>
</dbReference>
<dbReference type="FunFam" id="1.10.8.50:FF:000001">
    <property type="entry name" value="30S ribosomal protein S13"/>
    <property type="match status" value="1"/>
</dbReference>
<dbReference type="FunFam" id="4.10.910.10:FF:000001">
    <property type="entry name" value="30S ribosomal protein S13"/>
    <property type="match status" value="1"/>
</dbReference>
<dbReference type="Gene3D" id="1.10.8.50">
    <property type="match status" value="1"/>
</dbReference>
<dbReference type="Gene3D" id="4.10.910.10">
    <property type="entry name" value="30s ribosomal protein s13, domain 2"/>
    <property type="match status" value="1"/>
</dbReference>
<dbReference type="HAMAP" id="MF_01315">
    <property type="entry name" value="Ribosomal_uS13"/>
    <property type="match status" value="1"/>
</dbReference>
<dbReference type="InterPro" id="IPR027437">
    <property type="entry name" value="Rbsml_uS13_C"/>
</dbReference>
<dbReference type="InterPro" id="IPR001892">
    <property type="entry name" value="Ribosomal_uS13"/>
</dbReference>
<dbReference type="InterPro" id="IPR010979">
    <property type="entry name" value="Ribosomal_uS13-like_H2TH"/>
</dbReference>
<dbReference type="InterPro" id="IPR019980">
    <property type="entry name" value="Ribosomal_uS13_bac-type"/>
</dbReference>
<dbReference type="InterPro" id="IPR018269">
    <property type="entry name" value="Ribosomal_uS13_CS"/>
</dbReference>
<dbReference type="NCBIfam" id="TIGR03631">
    <property type="entry name" value="uS13_bact"/>
    <property type="match status" value="1"/>
</dbReference>
<dbReference type="PANTHER" id="PTHR10871">
    <property type="entry name" value="30S RIBOSOMAL PROTEIN S13/40S RIBOSOMAL PROTEIN S18"/>
    <property type="match status" value="1"/>
</dbReference>
<dbReference type="PANTHER" id="PTHR10871:SF1">
    <property type="entry name" value="SMALL RIBOSOMAL SUBUNIT PROTEIN US13M"/>
    <property type="match status" value="1"/>
</dbReference>
<dbReference type="Pfam" id="PF00416">
    <property type="entry name" value="Ribosomal_S13"/>
    <property type="match status" value="1"/>
</dbReference>
<dbReference type="PIRSF" id="PIRSF002134">
    <property type="entry name" value="Ribosomal_S13"/>
    <property type="match status" value="1"/>
</dbReference>
<dbReference type="SUPFAM" id="SSF46946">
    <property type="entry name" value="S13-like H2TH domain"/>
    <property type="match status" value="1"/>
</dbReference>
<dbReference type="PROSITE" id="PS00646">
    <property type="entry name" value="RIBOSOMAL_S13_1"/>
    <property type="match status" value="1"/>
</dbReference>
<dbReference type="PROSITE" id="PS50159">
    <property type="entry name" value="RIBOSOMAL_S13_2"/>
    <property type="match status" value="1"/>
</dbReference>
<feature type="chain" id="PRO_0000306740" description="Small ribosomal subunit protein uS13">
    <location>
        <begin position="1"/>
        <end position="121"/>
    </location>
</feature>
<feature type="region of interest" description="Disordered" evidence="2">
    <location>
        <begin position="94"/>
        <end position="121"/>
    </location>
</feature>